<protein>
    <recommendedName>
        <fullName evidence="1">Methionyl-tRNA formyltransferase</fullName>
        <ecNumber evidence="1">2.1.2.9</ecNumber>
    </recommendedName>
</protein>
<feature type="chain" id="PRO_1000098456" description="Methionyl-tRNA formyltransferase">
    <location>
        <begin position="1"/>
        <end position="319"/>
    </location>
</feature>
<feature type="binding site" evidence="1">
    <location>
        <begin position="116"/>
        <end position="119"/>
    </location>
    <ligand>
        <name>(6S)-5,6,7,8-tetrahydrofolate</name>
        <dbReference type="ChEBI" id="CHEBI:57453"/>
    </ligand>
</feature>
<evidence type="ECO:0000255" key="1">
    <source>
        <dbReference type="HAMAP-Rule" id="MF_00182"/>
    </source>
</evidence>
<reference key="1">
    <citation type="journal article" date="2008" name="BMC Microbiol.">
        <title>Complete genome sequence of Treponema pallidum ssp. pallidum strain SS14 determined with oligonucleotide arrays.</title>
        <authorList>
            <person name="Matejkova P."/>
            <person name="Strouhal M."/>
            <person name="Smajs D."/>
            <person name="Norris S.J."/>
            <person name="Palzkill T."/>
            <person name="Petrosino J.F."/>
            <person name="Sodergren E."/>
            <person name="Norton J.E."/>
            <person name="Singh J."/>
            <person name="Richmond T.A."/>
            <person name="Molla M.N."/>
            <person name="Albert T.J."/>
            <person name="Weinstock G.M."/>
        </authorList>
    </citation>
    <scope>NUCLEOTIDE SEQUENCE [LARGE SCALE GENOMIC DNA]</scope>
    <source>
        <strain>SS14</strain>
    </source>
</reference>
<organism>
    <name type="scientific">Treponema pallidum subsp. pallidum (strain SS14)</name>
    <dbReference type="NCBI Taxonomy" id="455434"/>
    <lineage>
        <taxon>Bacteria</taxon>
        <taxon>Pseudomonadati</taxon>
        <taxon>Spirochaetota</taxon>
        <taxon>Spirochaetia</taxon>
        <taxon>Spirochaetales</taxon>
        <taxon>Treponemataceae</taxon>
        <taxon>Treponema</taxon>
    </lineage>
</organism>
<comment type="function">
    <text evidence="1">Attaches a formyl group to the free amino group of methionyl-tRNA(fMet). The formyl group appears to play a dual role in the initiator identity of N-formylmethionyl-tRNA by promoting its recognition by IF2 and preventing the misappropriation of this tRNA by the elongation apparatus.</text>
</comment>
<comment type="catalytic activity">
    <reaction evidence="1">
        <text>L-methionyl-tRNA(fMet) + (6R)-10-formyltetrahydrofolate = N-formyl-L-methionyl-tRNA(fMet) + (6S)-5,6,7,8-tetrahydrofolate + H(+)</text>
        <dbReference type="Rhea" id="RHEA:24380"/>
        <dbReference type="Rhea" id="RHEA-COMP:9952"/>
        <dbReference type="Rhea" id="RHEA-COMP:9953"/>
        <dbReference type="ChEBI" id="CHEBI:15378"/>
        <dbReference type="ChEBI" id="CHEBI:57453"/>
        <dbReference type="ChEBI" id="CHEBI:78530"/>
        <dbReference type="ChEBI" id="CHEBI:78844"/>
        <dbReference type="ChEBI" id="CHEBI:195366"/>
        <dbReference type="EC" id="2.1.2.9"/>
    </reaction>
</comment>
<comment type="similarity">
    <text evidence="1">Belongs to the Fmt family.</text>
</comment>
<name>FMT_TREPS</name>
<accession>B2S3Z5</accession>
<proteinExistence type="inferred from homology"/>
<gene>
    <name evidence="1" type="primary">fmt</name>
    <name type="ordered locus">TPASS_0756</name>
</gene>
<sequence length="319" mass="34261">MVRVFFAGTPECAVPSLRRVACAHRVVGVLTNPPAAVGRSGKLVHSAVAREFFRLKASGVLPESASLFVPGRLDRAFYDAVEALRPDVLVCFAYGKIFGPRFLALFPRGAINVHPSLLPRWRGSTPVPAAILAGDCETGVTLQYIGEEMDAGDILAQSRVQLDGTETTGALLSRLSLVAADLVDDVLVGVERHTLAPAAQDHSQATFCGKLCREMGLADWSNPAVVLERKIRAFTPWPGLFTYKDGERIAILQARSCESSFVPLAPVGTVLAADKNGVFVQTGDGVLSLLQLQRSGKKPLFWRDFLNGSPLLLTGRLGV</sequence>
<keyword id="KW-0648">Protein biosynthesis</keyword>
<keyword id="KW-0808">Transferase</keyword>
<dbReference type="EC" id="2.1.2.9" evidence="1"/>
<dbReference type="EMBL" id="CP000805">
    <property type="protein sequence ID" value="ACD71174.1"/>
    <property type="molecule type" value="Genomic_DNA"/>
</dbReference>
<dbReference type="RefSeq" id="WP_010882201.1">
    <property type="nucleotide sequence ID" value="NC_021508.1"/>
</dbReference>
<dbReference type="SMR" id="B2S3Z5"/>
<dbReference type="GeneID" id="93876523"/>
<dbReference type="KEGG" id="tpp:TPASS_0756"/>
<dbReference type="PATRIC" id="fig|455434.6.peg.745"/>
<dbReference type="Proteomes" id="UP000001202">
    <property type="component" value="Chromosome"/>
</dbReference>
<dbReference type="GO" id="GO:0005829">
    <property type="term" value="C:cytosol"/>
    <property type="evidence" value="ECO:0007669"/>
    <property type="project" value="TreeGrafter"/>
</dbReference>
<dbReference type="GO" id="GO:0004479">
    <property type="term" value="F:methionyl-tRNA formyltransferase activity"/>
    <property type="evidence" value="ECO:0007669"/>
    <property type="project" value="UniProtKB-UniRule"/>
</dbReference>
<dbReference type="CDD" id="cd08646">
    <property type="entry name" value="FMT_core_Met-tRNA-FMT_N"/>
    <property type="match status" value="1"/>
</dbReference>
<dbReference type="CDD" id="cd08704">
    <property type="entry name" value="Met_tRNA_FMT_C"/>
    <property type="match status" value="1"/>
</dbReference>
<dbReference type="Gene3D" id="3.10.25.10">
    <property type="entry name" value="Formyl transferase, C-terminal domain"/>
    <property type="match status" value="1"/>
</dbReference>
<dbReference type="Gene3D" id="3.40.50.170">
    <property type="entry name" value="Formyl transferase, N-terminal domain"/>
    <property type="match status" value="1"/>
</dbReference>
<dbReference type="HAMAP" id="MF_00182">
    <property type="entry name" value="Formyl_trans"/>
    <property type="match status" value="1"/>
</dbReference>
<dbReference type="InterPro" id="IPR005794">
    <property type="entry name" value="Fmt"/>
</dbReference>
<dbReference type="InterPro" id="IPR005793">
    <property type="entry name" value="Formyl_trans_C"/>
</dbReference>
<dbReference type="InterPro" id="IPR037022">
    <property type="entry name" value="Formyl_trans_C_sf"/>
</dbReference>
<dbReference type="InterPro" id="IPR002376">
    <property type="entry name" value="Formyl_transf_N"/>
</dbReference>
<dbReference type="InterPro" id="IPR036477">
    <property type="entry name" value="Formyl_transf_N_sf"/>
</dbReference>
<dbReference type="InterPro" id="IPR011034">
    <property type="entry name" value="Formyl_transferase-like_C_sf"/>
</dbReference>
<dbReference type="InterPro" id="IPR044135">
    <property type="entry name" value="Met-tRNA-FMT_C"/>
</dbReference>
<dbReference type="InterPro" id="IPR041711">
    <property type="entry name" value="Met-tRNA-FMT_N"/>
</dbReference>
<dbReference type="NCBIfam" id="TIGR00460">
    <property type="entry name" value="fmt"/>
    <property type="match status" value="1"/>
</dbReference>
<dbReference type="PANTHER" id="PTHR11138">
    <property type="entry name" value="METHIONYL-TRNA FORMYLTRANSFERASE"/>
    <property type="match status" value="1"/>
</dbReference>
<dbReference type="PANTHER" id="PTHR11138:SF5">
    <property type="entry name" value="METHIONYL-TRNA FORMYLTRANSFERASE, MITOCHONDRIAL"/>
    <property type="match status" value="1"/>
</dbReference>
<dbReference type="Pfam" id="PF02911">
    <property type="entry name" value="Formyl_trans_C"/>
    <property type="match status" value="1"/>
</dbReference>
<dbReference type="Pfam" id="PF00551">
    <property type="entry name" value="Formyl_trans_N"/>
    <property type="match status" value="1"/>
</dbReference>
<dbReference type="SUPFAM" id="SSF50486">
    <property type="entry name" value="FMT C-terminal domain-like"/>
    <property type="match status" value="1"/>
</dbReference>
<dbReference type="SUPFAM" id="SSF53328">
    <property type="entry name" value="Formyltransferase"/>
    <property type="match status" value="1"/>
</dbReference>